<accession>B5E3K1</accession>
<proteinExistence type="inferred from homology"/>
<evidence type="ECO:0000255" key="1">
    <source>
        <dbReference type="HAMAP-Rule" id="MF_00170"/>
    </source>
</evidence>
<keyword id="KW-0413">Isomerase</keyword>
<protein>
    <recommendedName>
        <fullName evidence="1">Ribose-5-phosphate isomerase A</fullName>
        <ecNumber evidence="1">5.3.1.6</ecNumber>
    </recommendedName>
    <alternativeName>
        <fullName evidence="1">Phosphoriboisomerase A</fullName>
        <shortName evidence="1">PRI</shortName>
    </alternativeName>
</protein>
<gene>
    <name evidence="1" type="primary">rpiA</name>
    <name type="ordered locus">SPG_0749</name>
</gene>
<name>RPIA_STRP4</name>
<feature type="chain" id="PRO_1000097698" description="Ribose-5-phosphate isomerase A">
    <location>
        <begin position="1"/>
        <end position="227"/>
    </location>
</feature>
<feature type="active site" description="Proton acceptor" evidence="1">
    <location>
        <position position="104"/>
    </location>
</feature>
<feature type="binding site" evidence="1">
    <location>
        <begin position="26"/>
        <end position="29"/>
    </location>
    <ligand>
        <name>substrate</name>
    </ligand>
</feature>
<feature type="binding site" evidence="1">
    <location>
        <begin position="82"/>
        <end position="85"/>
    </location>
    <ligand>
        <name>substrate</name>
    </ligand>
</feature>
<feature type="binding site" evidence="1">
    <location>
        <begin position="95"/>
        <end position="98"/>
    </location>
    <ligand>
        <name>substrate</name>
    </ligand>
</feature>
<feature type="binding site" evidence="1">
    <location>
        <position position="122"/>
    </location>
    <ligand>
        <name>substrate</name>
    </ligand>
</feature>
<sequence length="227" mass="24792">MENLKKMAGIKAAEFVSDGMVVGLGTGSTAYYFVEEIGRRIKEEGLQITAVTTSSVTTKQAEGLNIPLKSIDQVDFVDVTVDGADEVDSQFNGIKGGGGALLMEKVVATPSKEYIWVVDESKLVEKLGAFKLPVEVVQYGAEQVFRHFERAGYKPSFREKDGQRFVTDMQNFIIDLALDVIENPIAFGQELDHVVGVVEHGLFNQMVDKVIVAGRDGVQISTSKKGK</sequence>
<reference key="1">
    <citation type="journal article" date="2001" name="Microb. Drug Resist.">
        <title>Annotated draft genomic sequence from a Streptococcus pneumoniae type 19F clinical isolate.</title>
        <authorList>
            <person name="Dopazo J."/>
            <person name="Mendoza A."/>
            <person name="Herrero J."/>
            <person name="Caldara F."/>
            <person name="Humbert Y."/>
            <person name="Friedli L."/>
            <person name="Guerrier M."/>
            <person name="Grand-Schenk E."/>
            <person name="Gandin C."/>
            <person name="de Francesco M."/>
            <person name="Polissi A."/>
            <person name="Buell G."/>
            <person name="Feger G."/>
            <person name="Garcia E."/>
            <person name="Peitsch M."/>
            <person name="Garcia-Bustos J.F."/>
        </authorList>
    </citation>
    <scope>NUCLEOTIDE SEQUENCE [LARGE SCALE GENOMIC DNA]</scope>
    <source>
        <strain>G54</strain>
    </source>
</reference>
<reference key="2">
    <citation type="submission" date="2008-03" db="EMBL/GenBank/DDBJ databases">
        <title>Pneumococcal beta glucoside metabolism investigated by whole genome comparison.</title>
        <authorList>
            <person name="Mulas L."/>
            <person name="Trappetti C."/>
            <person name="Hakenbeck R."/>
            <person name="Iannelli F."/>
            <person name="Pozzi G."/>
            <person name="Davidsen T.M."/>
            <person name="Tettelin H."/>
            <person name="Oggioni M."/>
        </authorList>
    </citation>
    <scope>NUCLEOTIDE SEQUENCE [LARGE SCALE GENOMIC DNA]</scope>
    <source>
        <strain>G54</strain>
    </source>
</reference>
<organism>
    <name type="scientific">Streptococcus pneumoniae serotype 19F (strain G54)</name>
    <dbReference type="NCBI Taxonomy" id="512566"/>
    <lineage>
        <taxon>Bacteria</taxon>
        <taxon>Bacillati</taxon>
        <taxon>Bacillota</taxon>
        <taxon>Bacilli</taxon>
        <taxon>Lactobacillales</taxon>
        <taxon>Streptococcaceae</taxon>
        <taxon>Streptococcus</taxon>
    </lineage>
</organism>
<comment type="function">
    <text evidence="1">Catalyzes the reversible conversion of ribose-5-phosphate to ribulose 5-phosphate.</text>
</comment>
<comment type="catalytic activity">
    <reaction evidence="1">
        <text>aldehydo-D-ribose 5-phosphate = D-ribulose 5-phosphate</text>
        <dbReference type="Rhea" id="RHEA:14657"/>
        <dbReference type="ChEBI" id="CHEBI:58121"/>
        <dbReference type="ChEBI" id="CHEBI:58273"/>
        <dbReference type="EC" id="5.3.1.6"/>
    </reaction>
</comment>
<comment type="pathway">
    <text evidence="1">Carbohydrate degradation; pentose phosphate pathway; D-ribose 5-phosphate from D-ribulose 5-phosphate (non-oxidative stage): step 1/1.</text>
</comment>
<comment type="subunit">
    <text evidence="1">Homodimer.</text>
</comment>
<comment type="similarity">
    <text evidence="1">Belongs to the ribose 5-phosphate isomerase family.</text>
</comment>
<dbReference type="EC" id="5.3.1.6" evidence="1"/>
<dbReference type="EMBL" id="CP001015">
    <property type="protein sequence ID" value="ACF55342.1"/>
    <property type="molecule type" value="Genomic_DNA"/>
</dbReference>
<dbReference type="SMR" id="B5E3K1"/>
<dbReference type="KEGG" id="spx:SPG_0749"/>
<dbReference type="HOGENOM" id="CLU_056590_1_0_9"/>
<dbReference type="UniPathway" id="UPA00115">
    <property type="reaction ID" value="UER00412"/>
</dbReference>
<dbReference type="GO" id="GO:0004751">
    <property type="term" value="F:ribose-5-phosphate isomerase activity"/>
    <property type="evidence" value="ECO:0007669"/>
    <property type="project" value="UniProtKB-UniRule"/>
</dbReference>
<dbReference type="GO" id="GO:0009052">
    <property type="term" value="P:pentose-phosphate shunt, non-oxidative branch"/>
    <property type="evidence" value="ECO:0007669"/>
    <property type="project" value="UniProtKB-UniRule"/>
</dbReference>
<dbReference type="CDD" id="cd01398">
    <property type="entry name" value="RPI_A"/>
    <property type="match status" value="1"/>
</dbReference>
<dbReference type="FunFam" id="3.40.50.1360:FF:000001">
    <property type="entry name" value="Ribose-5-phosphate isomerase A"/>
    <property type="match status" value="1"/>
</dbReference>
<dbReference type="Gene3D" id="3.30.70.260">
    <property type="match status" value="1"/>
</dbReference>
<dbReference type="Gene3D" id="3.40.50.1360">
    <property type="match status" value="1"/>
</dbReference>
<dbReference type="HAMAP" id="MF_00170">
    <property type="entry name" value="Rib_5P_isom_A"/>
    <property type="match status" value="1"/>
</dbReference>
<dbReference type="InterPro" id="IPR037171">
    <property type="entry name" value="NagB/RpiA_transferase-like"/>
</dbReference>
<dbReference type="InterPro" id="IPR050262">
    <property type="entry name" value="Ribose-5P_isomerase"/>
</dbReference>
<dbReference type="InterPro" id="IPR020672">
    <property type="entry name" value="Ribose5P_isomerase_typA_subgr"/>
</dbReference>
<dbReference type="InterPro" id="IPR004788">
    <property type="entry name" value="Ribose5P_isomerase_type_A"/>
</dbReference>
<dbReference type="NCBIfam" id="NF001924">
    <property type="entry name" value="PRK00702.1"/>
    <property type="match status" value="1"/>
</dbReference>
<dbReference type="NCBIfam" id="TIGR00021">
    <property type="entry name" value="rpiA"/>
    <property type="match status" value="1"/>
</dbReference>
<dbReference type="PANTHER" id="PTHR43748">
    <property type="entry name" value="RIBOSE-5-PHOSPHATE ISOMERASE 3, CHLOROPLASTIC-RELATED"/>
    <property type="match status" value="1"/>
</dbReference>
<dbReference type="PANTHER" id="PTHR43748:SF3">
    <property type="entry name" value="RIBOSE-5-PHOSPHATE ISOMERASE 3, CHLOROPLASTIC-RELATED"/>
    <property type="match status" value="1"/>
</dbReference>
<dbReference type="Pfam" id="PF06026">
    <property type="entry name" value="Rib_5-P_isom_A"/>
    <property type="match status" value="1"/>
</dbReference>
<dbReference type="SUPFAM" id="SSF75445">
    <property type="entry name" value="D-ribose-5-phosphate isomerase (RpiA), lid domain"/>
    <property type="match status" value="1"/>
</dbReference>
<dbReference type="SUPFAM" id="SSF100950">
    <property type="entry name" value="NagB/RpiA/CoA transferase-like"/>
    <property type="match status" value="1"/>
</dbReference>